<organism>
    <name type="scientific">Caenorhabditis elegans</name>
    <dbReference type="NCBI Taxonomy" id="6239"/>
    <lineage>
        <taxon>Eukaryota</taxon>
        <taxon>Metazoa</taxon>
        <taxon>Ecdysozoa</taxon>
        <taxon>Nematoda</taxon>
        <taxon>Chromadorea</taxon>
        <taxon>Rhabditida</taxon>
        <taxon>Rhabditina</taxon>
        <taxon>Rhabditomorpha</taxon>
        <taxon>Rhabditoidea</taxon>
        <taxon>Rhabditidae</taxon>
        <taxon>Peloderinae</taxon>
        <taxon>Caenorhabditis</taxon>
    </lineage>
</organism>
<gene>
    <name type="primary">prp-19</name>
    <name type="ORF">T10F2.4</name>
</gene>
<comment type="function">
    <text evidence="1 2">Probable ubiquitin-protein ligase which is mainly involved pre-mRNA splicing and DNA repair. Core component of the NTC/Nineteen complex which is part of the spliceosome and participates in its assembly, its remodeling and is required for its activity (By similarity). Together with emb-4, necessary for interaction of rnp-4, a probable exon junction complex component, with mRNAs and spliceosomal snRNAs. Plays a role in nuclear retention of unspliced mRNAs.</text>
</comment>
<comment type="catalytic activity">
    <reaction evidence="1">
        <text>S-ubiquitinyl-[E2 ubiquitin-conjugating enzyme]-L-cysteine + [acceptor protein]-L-lysine = [E2 ubiquitin-conjugating enzyme]-L-cysteine + N(6)-ubiquitinyl-[acceptor protein]-L-lysine.</text>
        <dbReference type="EC" id="2.3.2.27"/>
    </reaction>
</comment>
<comment type="pathway">
    <text evidence="1">Protein modification; protein ubiquitination.</text>
</comment>
<comment type="subunit">
    <text evidence="1">Homotetramer. Component of the NTC complex (or PRP19-associated complex) which is associated with the spliceosome.</text>
</comment>
<comment type="subcellular location">
    <subcellularLocation>
        <location evidence="1">Nucleus</location>
    </subcellularLocation>
    <subcellularLocation>
        <location evidence="1">Nucleus</location>
        <location evidence="1">Nucleoplasm</location>
    </subcellularLocation>
</comment>
<comment type="disruption phenotype">
    <text evidence="2">Enhances sterility conferred by rnp-4 disruption. Combined with emb-4 knockdown, leads to accumulation and leakage of unspliced ama-1 and tra-2 to the cytoplasm, severe growth retardation and arrest in larval stages, and loss of interaction of rnp-4 with pre-mRNA and spliceosomal U snRNAs.</text>
</comment>
<comment type="similarity">
    <text evidence="3">Belongs to the WD repeat PRP19 family.</text>
</comment>
<reference key="1">
    <citation type="journal article" date="1998" name="Science">
        <title>Genome sequence of the nematode C. elegans: a platform for investigating biology.</title>
        <authorList>
            <consortium name="The C. elegans sequencing consortium"/>
        </authorList>
    </citation>
    <scope>NUCLEOTIDE SEQUENCE [LARGE SCALE GENOMIC DNA]</scope>
    <source>
        <strain>Bristol N2</strain>
    </source>
</reference>
<reference key="2">
    <citation type="journal article" date="2013" name="Mol. Cell. Biol.">
        <title>A specific set of exon junction complex subunits is required for the nuclear retention of unspliced RNAs in Caenorhabditis elegans.</title>
        <authorList>
            <person name="Shiimori M."/>
            <person name="Inoue K."/>
            <person name="Sakamoto H."/>
        </authorList>
    </citation>
    <scope>FUNCTION</scope>
    <scope>DISRUPTION PHENOTYPE</scope>
</reference>
<dbReference type="EC" id="2.3.2.27" evidence="1"/>
<dbReference type="EMBL" id="FO081619">
    <property type="protein sequence ID" value="CCD72869.1"/>
    <property type="molecule type" value="Genomic_DNA"/>
</dbReference>
<dbReference type="PIR" id="T16846">
    <property type="entry name" value="T16846"/>
</dbReference>
<dbReference type="RefSeq" id="NP_001293643.1">
    <property type="nucleotide sequence ID" value="NM_001306714.1"/>
</dbReference>
<dbReference type="RefSeq" id="NP_001380015.1">
    <property type="nucleotide sequence ID" value="NM_001392088.1"/>
</dbReference>
<dbReference type="PDB" id="8RO0">
    <property type="method" value="EM"/>
    <property type="resolution" value="2.90 A"/>
    <property type="chains" value="q/r/s/t=1-492"/>
</dbReference>
<dbReference type="PDB" id="8RO1">
    <property type="method" value="EM"/>
    <property type="resolution" value="3.00 A"/>
    <property type="chains" value="q/r/s/t=1-492"/>
</dbReference>
<dbReference type="PDBsum" id="8RO0"/>
<dbReference type="PDBsum" id="8RO1"/>
<dbReference type="EMDB" id="EMD-19397"/>
<dbReference type="EMDB" id="EMD-19398"/>
<dbReference type="SMR" id="Q10051"/>
<dbReference type="DIP" id="DIP-26296N"/>
<dbReference type="FunCoup" id="Q10051">
    <property type="interactions" value="2802"/>
</dbReference>
<dbReference type="IntAct" id="Q10051">
    <property type="interactions" value="2"/>
</dbReference>
<dbReference type="STRING" id="6239.T10F2.4.1"/>
<dbReference type="PaxDb" id="6239-T10F2.4"/>
<dbReference type="PeptideAtlas" id="Q10051"/>
<dbReference type="EnsemblMetazoa" id="T10F2.4.1">
    <property type="protein sequence ID" value="T10F2.4.1"/>
    <property type="gene ID" value="WBGene00020423"/>
</dbReference>
<dbReference type="GeneID" id="24104882"/>
<dbReference type="UCSC" id="T10F2.4.1">
    <property type="organism name" value="c. elegans"/>
</dbReference>
<dbReference type="AGR" id="WB:WBGene00020423"/>
<dbReference type="WormBase" id="T10F2.4">
    <property type="protein sequence ID" value="CE38104"/>
    <property type="gene ID" value="WBGene00020423"/>
    <property type="gene designation" value="prp-19"/>
</dbReference>
<dbReference type="eggNOG" id="KOG0289">
    <property type="taxonomic scope" value="Eukaryota"/>
</dbReference>
<dbReference type="GeneTree" id="ENSGT00940000153662"/>
<dbReference type="HOGENOM" id="CLU_023894_1_1_1"/>
<dbReference type="InParanoid" id="Q10051"/>
<dbReference type="OMA" id="SLDQHWA"/>
<dbReference type="OrthoDB" id="687049at2759"/>
<dbReference type="PhylomeDB" id="Q10051"/>
<dbReference type="Reactome" id="R-CEL-6781823">
    <property type="pathway name" value="Formation of TC-NER Pre-Incision Complex"/>
</dbReference>
<dbReference type="Reactome" id="R-CEL-6782135">
    <property type="pathway name" value="Dual incision in TC-NER"/>
</dbReference>
<dbReference type="Reactome" id="R-CEL-6782210">
    <property type="pathway name" value="Gap-filling DNA repair synthesis and ligation in TC-NER"/>
</dbReference>
<dbReference type="Reactome" id="R-CEL-72163">
    <property type="pathway name" value="mRNA Splicing - Major Pathway"/>
</dbReference>
<dbReference type="UniPathway" id="UPA00143"/>
<dbReference type="PRO" id="PR:Q10051"/>
<dbReference type="Proteomes" id="UP000001940">
    <property type="component" value="Chromosome III"/>
</dbReference>
<dbReference type="Bgee" id="WBGene00020423">
    <property type="expression patterns" value="Expressed in embryo and 4 other cell types or tissues"/>
</dbReference>
<dbReference type="GO" id="GO:0005737">
    <property type="term" value="C:cytoplasm"/>
    <property type="evidence" value="ECO:0000318"/>
    <property type="project" value="GO_Central"/>
</dbReference>
<dbReference type="GO" id="GO:0005654">
    <property type="term" value="C:nucleoplasm"/>
    <property type="evidence" value="ECO:0007669"/>
    <property type="project" value="UniProtKB-SubCell"/>
</dbReference>
<dbReference type="GO" id="GO:0005634">
    <property type="term" value="C:nucleus"/>
    <property type="evidence" value="ECO:0000250"/>
    <property type="project" value="UniProtKB"/>
</dbReference>
<dbReference type="GO" id="GO:0000974">
    <property type="term" value="C:Prp19 complex"/>
    <property type="evidence" value="ECO:0000318"/>
    <property type="project" value="GO_Central"/>
</dbReference>
<dbReference type="GO" id="GO:0071006">
    <property type="term" value="C:U2-type catalytic step 1 spliceosome"/>
    <property type="evidence" value="ECO:0000318"/>
    <property type="project" value="GO_Central"/>
</dbReference>
<dbReference type="GO" id="GO:0061630">
    <property type="term" value="F:ubiquitin protein ligase activity"/>
    <property type="evidence" value="ECO:0000250"/>
    <property type="project" value="UniProtKB"/>
</dbReference>
<dbReference type="GO" id="GO:0004842">
    <property type="term" value="F:ubiquitin-protein transferase activity"/>
    <property type="evidence" value="ECO:0000318"/>
    <property type="project" value="GO_Central"/>
</dbReference>
<dbReference type="GO" id="GO:0030154">
    <property type="term" value="P:cell differentiation"/>
    <property type="evidence" value="ECO:0007669"/>
    <property type="project" value="UniProtKB-KW"/>
</dbReference>
<dbReference type="GO" id="GO:0006281">
    <property type="term" value="P:DNA repair"/>
    <property type="evidence" value="ECO:0007669"/>
    <property type="project" value="UniProtKB-KW"/>
</dbReference>
<dbReference type="GO" id="GO:0000398">
    <property type="term" value="P:mRNA splicing, via spliceosome"/>
    <property type="evidence" value="ECO:0000318"/>
    <property type="project" value="GO_Central"/>
</dbReference>
<dbReference type="GO" id="GO:0071028">
    <property type="term" value="P:nuclear mRNA surveillance"/>
    <property type="evidence" value="ECO:0000315"/>
    <property type="project" value="UniProtKB"/>
</dbReference>
<dbReference type="GO" id="GO:0070534">
    <property type="term" value="P:protein K63-linked ubiquitination"/>
    <property type="evidence" value="ECO:0000250"/>
    <property type="project" value="UniProtKB"/>
</dbReference>
<dbReference type="CDD" id="cd16656">
    <property type="entry name" value="RING-Ubox_PRP19"/>
    <property type="match status" value="1"/>
</dbReference>
<dbReference type="CDD" id="cd00200">
    <property type="entry name" value="WD40"/>
    <property type="match status" value="1"/>
</dbReference>
<dbReference type="FunFam" id="2.130.10.10:FF:000043">
    <property type="entry name" value="pre-mRNA-processing factor 19"/>
    <property type="match status" value="1"/>
</dbReference>
<dbReference type="FunFam" id="3.30.40.10:FF:000027">
    <property type="entry name" value="Pre-mRNA-processing factor 19, putative"/>
    <property type="match status" value="1"/>
</dbReference>
<dbReference type="Gene3D" id="2.130.10.10">
    <property type="entry name" value="YVTN repeat-like/Quinoprotein amine dehydrogenase"/>
    <property type="match status" value="1"/>
</dbReference>
<dbReference type="Gene3D" id="3.30.40.10">
    <property type="entry name" value="Zinc/RING finger domain, C3HC4 (zinc finger)"/>
    <property type="match status" value="1"/>
</dbReference>
<dbReference type="InterPro" id="IPR020472">
    <property type="entry name" value="G-protein_beta_WD-40_rep"/>
</dbReference>
<dbReference type="InterPro" id="IPR013915">
    <property type="entry name" value="Pre-mRNA_splic_Prp19_cc"/>
</dbReference>
<dbReference type="InterPro" id="IPR038959">
    <property type="entry name" value="Prp19"/>
</dbReference>
<dbReference type="InterPro" id="IPR055340">
    <property type="entry name" value="RING-Ubox_PRP19"/>
</dbReference>
<dbReference type="InterPro" id="IPR003613">
    <property type="entry name" value="Ubox_domain"/>
</dbReference>
<dbReference type="InterPro" id="IPR015943">
    <property type="entry name" value="WD40/YVTN_repeat-like_dom_sf"/>
</dbReference>
<dbReference type="InterPro" id="IPR019775">
    <property type="entry name" value="WD40_repeat_CS"/>
</dbReference>
<dbReference type="InterPro" id="IPR036322">
    <property type="entry name" value="WD40_repeat_dom_sf"/>
</dbReference>
<dbReference type="InterPro" id="IPR001680">
    <property type="entry name" value="WD40_rpt"/>
</dbReference>
<dbReference type="InterPro" id="IPR013083">
    <property type="entry name" value="Znf_RING/FYVE/PHD"/>
</dbReference>
<dbReference type="PANTHER" id="PTHR43995">
    <property type="entry name" value="PRE-MRNA-PROCESSING FACTOR 19"/>
    <property type="match status" value="1"/>
</dbReference>
<dbReference type="PANTHER" id="PTHR43995:SF1">
    <property type="entry name" value="PRE-MRNA-PROCESSING FACTOR 19"/>
    <property type="match status" value="1"/>
</dbReference>
<dbReference type="Pfam" id="PF08606">
    <property type="entry name" value="Prp19"/>
    <property type="match status" value="1"/>
</dbReference>
<dbReference type="Pfam" id="PF04564">
    <property type="entry name" value="U-box"/>
    <property type="match status" value="1"/>
</dbReference>
<dbReference type="Pfam" id="PF24814">
    <property type="entry name" value="WD40_Prp19"/>
    <property type="match status" value="1"/>
</dbReference>
<dbReference type="PRINTS" id="PR00320">
    <property type="entry name" value="GPROTEINBRPT"/>
</dbReference>
<dbReference type="SMART" id="SM00504">
    <property type="entry name" value="Ubox"/>
    <property type="match status" value="1"/>
</dbReference>
<dbReference type="SMART" id="SM00320">
    <property type="entry name" value="WD40"/>
    <property type="match status" value="7"/>
</dbReference>
<dbReference type="SUPFAM" id="SSF57850">
    <property type="entry name" value="RING/U-box"/>
    <property type="match status" value="1"/>
</dbReference>
<dbReference type="SUPFAM" id="SSF50978">
    <property type="entry name" value="WD40 repeat-like"/>
    <property type="match status" value="1"/>
</dbReference>
<dbReference type="PROSITE" id="PS51698">
    <property type="entry name" value="U_BOX"/>
    <property type="match status" value="1"/>
</dbReference>
<dbReference type="PROSITE" id="PS00678">
    <property type="entry name" value="WD_REPEATS_1"/>
    <property type="match status" value="1"/>
</dbReference>
<dbReference type="PROSITE" id="PS50082">
    <property type="entry name" value="WD_REPEATS_2"/>
    <property type="match status" value="4"/>
</dbReference>
<dbReference type="PROSITE" id="PS50294">
    <property type="entry name" value="WD_REPEATS_REGION"/>
    <property type="match status" value="1"/>
</dbReference>
<name>PRP19_CAEEL</name>
<feature type="chain" id="PRO_0000051148" description="Pre-mRNA-processing factor 19">
    <location>
        <begin position="1"/>
        <end position="492"/>
    </location>
</feature>
<feature type="domain" description="U-box">
    <location>
        <begin position="1"/>
        <end position="72"/>
    </location>
</feature>
<feature type="repeat" description="WD 1">
    <location>
        <begin position="207"/>
        <end position="246"/>
    </location>
</feature>
<feature type="repeat" description="WD 2">
    <location>
        <begin position="249"/>
        <end position="288"/>
    </location>
</feature>
<feature type="repeat" description="WD 3">
    <location>
        <begin position="291"/>
        <end position="330"/>
    </location>
</feature>
<feature type="repeat" description="WD 4">
    <location>
        <begin position="336"/>
        <end position="375"/>
    </location>
</feature>
<feature type="repeat" description="WD 5">
    <location>
        <begin position="378"/>
        <end position="417"/>
    </location>
</feature>
<feature type="repeat" description="WD 6">
    <location>
        <begin position="461"/>
        <end position="491"/>
    </location>
</feature>
<keyword id="KW-0002">3D-structure</keyword>
<keyword id="KW-0217">Developmental protein</keyword>
<keyword id="KW-0221">Differentiation</keyword>
<keyword id="KW-0227">DNA damage</keyword>
<keyword id="KW-0234">DNA repair</keyword>
<keyword id="KW-0507">mRNA processing</keyword>
<keyword id="KW-0508">mRNA splicing</keyword>
<keyword id="KW-0539">Nucleus</keyword>
<keyword id="KW-1185">Reference proteome</keyword>
<keyword id="KW-0677">Repeat</keyword>
<keyword id="KW-0747">Spliceosome</keyword>
<keyword id="KW-0808">Transferase</keyword>
<keyword id="KW-0833">Ubl conjugation pathway</keyword>
<keyword id="KW-0853">WD repeat</keyword>
<protein>
    <recommendedName>
        <fullName evidence="3">Pre-mRNA-processing factor 19</fullName>
        <ecNumber evidence="1">2.3.2.27</ecNumber>
    </recommendedName>
    <alternativeName>
        <fullName>PRP19/PSO4 homolog</fullName>
    </alternativeName>
    <alternativeName>
        <fullName evidence="3">RING-type E3 ubiquitin transferase PRP19</fullName>
    </alternativeName>
</protein>
<proteinExistence type="evidence at protein level"/>
<sequence>MSFVCGISGELTEDPVVSQVSGHIFDRRLIVKFIAENGTDPISHGELSEDQLVSLKSGGTGSAPRNVSGTSIPSLLKMLQDEWDTVMLNSFSLRQQLQIARQELSHSLYQHDAACRVISRLSKELTAAREALSTLKPHTSAKVDDDVSIDESEDQQGLSEAILAKLEEKSKSLTAERKQRGKNLPEGLAKTEELAELKQTASHTGIHSTGTPGITALDIKGNLSLTGGIDKTVVLYDYEKEQVMQTFKGHNKKINAVVLHPDNITAISASADSHIRVWSATDSSSKAIIDVHQAPVTDISLNASGDYILSASDDSYWAFSDIRSGKSLCKVSVEPGSQIAVHSIEFHPDGLIFGTGAADAVVKIWDLKNQTVAAAFPGHTAAVRSIAFSENGYYLATGSEDGEVKLWDLRKLKNLKTFANEEKQPINSLSFDMTGTFLGIGGQKVQVLHVKSWSEVVSLSDHSGPVTGVRFGENARSLVTCSLDKSLRVFSF</sequence>
<evidence type="ECO:0000250" key="1">
    <source>
        <dbReference type="UniProtKB" id="Q9UMS4"/>
    </source>
</evidence>
<evidence type="ECO:0000269" key="2">
    <source>
    </source>
</evidence>
<evidence type="ECO:0000305" key="3"/>
<accession>Q10051</accession>